<feature type="chain" id="PRO_1000138407" description="Heat shock protein HspQ">
    <location>
        <begin position="1"/>
        <end position="105"/>
    </location>
</feature>
<feature type="region of interest" description="Disordered" evidence="2">
    <location>
        <begin position="75"/>
        <end position="105"/>
    </location>
</feature>
<organism>
    <name type="scientific">Escherichia coli (strain K12 / DH10B)</name>
    <dbReference type="NCBI Taxonomy" id="316385"/>
    <lineage>
        <taxon>Bacteria</taxon>
        <taxon>Pseudomonadati</taxon>
        <taxon>Pseudomonadota</taxon>
        <taxon>Gammaproteobacteria</taxon>
        <taxon>Enterobacterales</taxon>
        <taxon>Enterobacteriaceae</taxon>
        <taxon>Escherichia</taxon>
    </lineage>
</organism>
<protein>
    <recommendedName>
        <fullName evidence="1">Heat shock protein HspQ</fullName>
    </recommendedName>
</protein>
<comment type="function">
    <text evidence="1">Involved in the degradation of certain denaturated proteins, including DnaA, during heat shock stress.</text>
</comment>
<comment type="subcellular location">
    <subcellularLocation>
        <location evidence="1">Cytoplasm</location>
    </subcellularLocation>
</comment>
<comment type="similarity">
    <text evidence="1">Belongs to the HspQ family.</text>
</comment>
<proteinExistence type="inferred from homology"/>
<keyword id="KW-0963">Cytoplasm</keyword>
<keyword id="KW-0346">Stress response</keyword>
<reference key="1">
    <citation type="journal article" date="2008" name="J. Bacteriol.">
        <title>The complete genome sequence of Escherichia coli DH10B: insights into the biology of a laboratory workhorse.</title>
        <authorList>
            <person name="Durfee T."/>
            <person name="Nelson R."/>
            <person name="Baldwin S."/>
            <person name="Plunkett G. III"/>
            <person name="Burland V."/>
            <person name="Mau B."/>
            <person name="Petrosino J.F."/>
            <person name="Qin X."/>
            <person name="Muzny D.M."/>
            <person name="Ayele M."/>
            <person name="Gibbs R.A."/>
            <person name="Csorgo B."/>
            <person name="Posfai G."/>
            <person name="Weinstock G.M."/>
            <person name="Blattner F.R."/>
        </authorList>
    </citation>
    <scope>NUCLEOTIDE SEQUENCE [LARGE SCALE GENOMIC DNA]</scope>
    <source>
        <strain>K12 / DH10B</strain>
    </source>
</reference>
<dbReference type="EMBL" id="CP000948">
    <property type="protein sequence ID" value="ACB02166.1"/>
    <property type="molecule type" value="Genomic_DNA"/>
</dbReference>
<dbReference type="RefSeq" id="WP_001295356.1">
    <property type="nucleotide sequence ID" value="NC_010473.1"/>
</dbReference>
<dbReference type="SMR" id="B1X8S0"/>
<dbReference type="GeneID" id="93776448"/>
<dbReference type="KEGG" id="ecd:ECDH10B_1036"/>
<dbReference type="HOGENOM" id="CLU_123865_1_0_6"/>
<dbReference type="GO" id="GO:0005737">
    <property type="term" value="C:cytoplasm"/>
    <property type="evidence" value="ECO:0007669"/>
    <property type="project" value="UniProtKB-SubCell"/>
</dbReference>
<dbReference type="GO" id="GO:0003677">
    <property type="term" value="F:DNA binding"/>
    <property type="evidence" value="ECO:0007669"/>
    <property type="project" value="InterPro"/>
</dbReference>
<dbReference type="GO" id="GO:0009408">
    <property type="term" value="P:response to heat"/>
    <property type="evidence" value="ECO:0007669"/>
    <property type="project" value="UniProtKB-UniRule"/>
</dbReference>
<dbReference type="Gene3D" id="2.30.30.390">
    <property type="entry name" value="Hemimethylated DNA-binding domain"/>
    <property type="match status" value="1"/>
</dbReference>
<dbReference type="HAMAP" id="MF_01194">
    <property type="entry name" value="HspQ"/>
    <property type="match status" value="1"/>
</dbReference>
<dbReference type="InterPro" id="IPR011722">
    <property type="entry name" value="Hemimethylated_DNA-bd_dom"/>
</dbReference>
<dbReference type="InterPro" id="IPR036623">
    <property type="entry name" value="Hemimethylated_DNA-bd_sf"/>
</dbReference>
<dbReference type="InterPro" id="IPR022866">
    <property type="entry name" value="HspQ"/>
</dbReference>
<dbReference type="NCBIfam" id="NF010729">
    <property type="entry name" value="PRK14129.1"/>
    <property type="match status" value="1"/>
</dbReference>
<dbReference type="NCBIfam" id="TIGR02097">
    <property type="entry name" value="yccV"/>
    <property type="match status" value="1"/>
</dbReference>
<dbReference type="Pfam" id="PF08755">
    <property type="entry name" value="YccV-like"/>
    <property type="match status" value="1"/>
</dbReference>
<dbReference type="SMART" id="SM00992">
    <property type="entry name" value="YccV-like"/>
    <property type="match status" value="1"/>
</dbReference>
<dbReference type="SUPFAM" id="SSF141255">
    <property type="entry name" value="YccV-like"/>
    <property type="match status" value="1"/>
</dbReference>
<evidence type="ECO:0000255" key="1">
    <source>
        <dbReference type="HAMAP-Rule" id="MF_01194"/>
    </source>
</evidence>
<evidence type="ECO:0000256" key="2">
    <source>
        <dbReference type="SAM" id="MobiDB-lite"/>
    </source>
</evidence>
<accession>B1X8S0</accession>
<name>HSPQ_ECODH</name>
<gene>
    <name evidence="1" type="primary">hspQ</name>
    <name type="ordered locus">ECDH10B_1036</name>
</gene>
<sequence length="105" mass="11779">MIASKFGIGQQVRHSLLGYLGVVVDIDPVYSLSEPSPDELAVNDELRAAPWYHVVMEDDNGLPVHTYLAEAQLSSELQDEHPEQPSMDELAQTIRKQLQAPRLRN</sequence>